<dbReference type="EMBL" id="AK126744">
    <property type="protein sequence ID" value="BAC86668.1"/>
    <property type="molecule type" value="mRNA"/>
</dbReference>
<dbReference type="BioMuta" id="-"/>
<dbReference type="PeptideAtlas" id="Q6ZTC4"/>
<dbReference type="TopDownProteomics" id="Q6ZTC4"/>
<dbReference type="neXtProt" id="NX_Q6ZTC4"/>
<dbReference type="InParanoid" id="Q6ZTC4"/>
<dbReference type="PAN-GO" id="Q6ZTC4">
    <property type="GO annotations" value="0 GO annotations based on evolutionary models"/>
</dbReference>
<dbReference type="Pharos" id="Q6ZTC4">
    <property type="development level" value="Tdark"/>
</dbReference>
<dbReference type="Proteomes" id="UP000005640">
    <property type="component" value="Unplaced"/>
</dbReference>
<dbReference type="RNAct" id="Q6ZTC4">
    <property type="molecule type" value="protein"/>
</dbReference>
<name>YT009_HUMAN</name>
<organism>
    <name type="scientific">Homo sapiens</name>
    <name type="common">Human</name>
    <dbReference type="NCBI Taxonomy" id="9606"/>
    <lineage>
        <taxon>Eukaryota</taxon>
        <taxon>Metazoa</taxon>
        <taxon>Chordata</taxon>
        <taxon>Craniata</taxon>
        <taxon>Vertebrata</taxon>
        <taxon>Euteleostomi</taxon>
        <taxon>Mammalia</taxon>
        <taxon>Eutheria</taxon>
        <taxon>Euarchontoglires</taxon>
        <taxon>Primates</taxon>
        <taxon>Haplorrhini</taxon>
        <taxon>Catarrhini</taxon>
        <taxon>Hominidae</taxon>
        <taxon>Homo</taxon>
    </lineage>
</organism>
<sequence>MQLGEHTHPQKNPKSLAGCLLPNPHPQLQLRGKRAAGLLLRRNPWCHPQAPGGSSTWAPSLPPILAPQAYLNFAPPTLVPGGSPGTEAQPVAPANALGSRSKLNLTQPSCLSSGSHLPLPFPAGMCPHPANPTWALRKGAEVPQGPPLSHTRKALCLAASGVGALLLEVPRHPGWGQQSAAGFQQVFQEGAGTHFPSVRVQPGRGKLQGQR</sequence>
<feature type="chain" id="PRO_0000336060" description="Putative uncharacterized protein FLJ44790">
    <location>
        <begin position="1"/>
        <end position="211"/>
    </location>
</feature>
<reference key="1">
    <citation type="journal article" date="2004" name="Nat. Genet.">
        <title>Complete sequencing and characterization of 21,243 full-length human cDNAs.</title>
        <authorList>
            <person name="Ota T."/>
            <person name="Suzuki Y."/>
            <person name="Nishikawa T."/>
            <person name="Otsuki T."/>
            <person name="Sugiyama T."/>
            <person name="Irie R."/>
            <person name="Wakamatsu A."/>
            <person name="Hayashi K."/>
            <person name="Sato H."/>
            <person name="Nagai K."/>
            <person name="Kimura K."/>
            <person name="Makita H."/>
            <person name="Sekine M."/>
            <person name="Obayashi M."/>
            <person name="Nishi T."/>
            <person name="Shibahara T."/>
            <person name="Tanaka T."/>
            <person name="Ishii S."/>
            <person name="Yamamoto J."/>
            <person name="Saito K."/>
            <person name="Kawai Y."/>
            <person name="Isono Y."/>
            <person name="Nakamura Y."/>
            <person name="Nagahari K."/>
            <person name="Murakami K."/>
            <person name="Yasuda T."/>
            <person name="Iwayanagi T."/>
            <person name="Wagatsuma M."/>
            <person name="Shiratori A."/>
            <person name="Sudo H."/>
            <person name="Hosoiri T."/>
            <person name="Kaku Y."/>
            <person name="Kodaira H."/>
            <person name="Kondo H."/>
            <person name="Sugawara M."/>
            <person name="Takahashi M."/>
            <person name="Kanda K."/>
            <person name="Yokoi T."/>
            <person name="Furuya T."/>
            <person name="Kikkawa E."/>
            <person name="Omura Y."/>
            <person name="Abe K."/>
            <person name="Kamihara K."/>
            <person name="Katsuta N."/>
            <person name="Sato K."/>
            <person name="Tanikawa M."/>
            <person name="Yamazaki M."/>
            <person name="Ninomiya K."/>
            <person name="Ishibashi T."/>
            <person name="Yamashita H."/>
            <person name="Murakawa K."/>
            <person name="Fujimori K."/>
            <person name="Tanai H."/>
            <person name="Kimata M."/>
            <person name="Watanabe M."/>
            <person name="Hiraoka S."/>
            <person name="Chiba Y."/>
            <person name="Ishida S."/>
            <person name="Ono Y."/>
            <person name="Takiguchi S."/>
            <person name="Watanabe S."/>
            <person name="Yosida M."/>
            <person name="Hotuta T."/>
            <person name="Kusano J."/>
            <person name="Kanehori K."/>
            <person name="Takahashi-Fujii A."/>
            <person name="Hara H."/>
            <person name="Tanase T.-O."/>
            <person name="Nomura Y."/>
            <person name="Togiya S."/>
            <person name="Komai F."/>
            <person name="Hara R."/>
            <person name="Takeuchi K."/>
            <person name="Arita M."/>
            <person name="Imose N."/>
            <person name="Musashino K."/>
            <person name="Yuuki H."/>
            <person name="Oshima A."/>
            <person name="Sasaki N."/>
            <person name="Aotsuka S."/>
            <person name="Yoshikawa Y."/>
            <person name="Matsunawa H."/>
            <person name="Ichihara T."/>
            <person name="Shiohata N."/>
            <person name="Sano S."/>
            <person name="Moriya S."/>
            <person name="Momiyama H."/>
            <person name="Satoh N."/>
            <person name="Takami S."/>
            <person name="Terashima Y."/>
            <person name="Suzuki O."/>
            <person name="Nakagawa S."/>
            <person name="Senoh A."/>
            <person name="Mizoguchi H."/>
            <person name="Goto Y."/>
            <person name="Shimizu F."/>
            <person name="Wakebe H."/>
            <person name="Hishigaki H."/>
            <person name="Watanabe T."/>
            <person name="Sugiyama A."/>
            <person name="Takemoto M."/>
            <person name="Kawakami B."/>
            <person name="Yamazaki M."/>
            <person name="Watanabe K."/>
            <person name="Kumagai A."/>
            <person name="Itakura S."/>
            <person name="Fukuzumi Y."/>
            <person name="Fujimori Y."/>
            <person name="Komiyama M."/>
            <person name="Tashiro H."/>
            <person name="Tanigami A."/>
            <person name="Fujiwara T."/>
            <person name="Ono T."/>
            <person name="Yamada K."/>
            <person name="Fujii Y."/>
            <person name="Ozaki K."/>
            <person name="Hirao M."/>
            <person name="Ohmori Y."/>
            <person name="Kawabata A."/>
            <person name="Hikiji T."/>
            <person name="Kobatake N."/>
            <person name="Inagaki H."/>
            <person name="Ikema Y."/>
            <person name="Okamoto S."/>
            <person name="Okitani R."/>
            <person name="Kawakami T."/>
            <person name="Noguchi S."/>
            <person name="Itoh T."/>
            <person name="Shigeta K."/>
            <person name="Senba T."/>
            <person name="Matsumura K."/>
            <person name="Nakajima Y."/>
            <person name="Mizuno T."/>
            <person name="Morinaga M."/>
            <person name="Sasaki M."/>
            <person name="Togashi T."/>
            <person name="Oyama M."/>
            <person name="Hata H."/>
            <person name="Watanabe M."/>
            <person name="Komatsu T."/>
            <person name="Mizushima-Sugano J."/>
            <person name="Satoh T."/>
            <person name="Shirai Y."/>
            <person name="Takahashi Y."/>
            <person name="Nakagawa K."/>
            <person name="Okumura K."/>
            <person name="Nagase T."/>
            <person name="Nomura N."/>
            <person name="Kikuchi H."/>
            <person name="Masuho Y."/>
            <person name="Yamashita R."/>
            <person name="Nakai K."/>
            <person name="Yada T."/>
            <person name="Nakamura Y."/>
            <person name="Ohara O."/>
            <person name="Isogai T."/>
            <person name="Sugano S."/>
        </authorList>
    </citation>
    <scope>NUCLEOTIDE SEQUENCE [LARGE SCALE MRNA]</scope>
    <source>
        <tissue>Cerebellum</tissue>
    </source>
</reference>
<protein>
    <recommendedName>
        <fullName>Putative uncharacterized protein FLJ44790</fullName>
    </recommendedName>
</protein>
<proteinExistence type="evidence at transcript level"/>
<accession>Q6ZTC4</accession>
<keyword id="KW-1185">Reference proteome</keyword>